<comment type="function">
    <text evidence="4">Proton-associated sucrose transporter. May be able to transport also glucose and fructose.</text>
</comment>
<comment type="catalytic activity">
    <reaction evidence="4">
        <text>sucrose(out) + H(+)(out) = sucrose(in) + H(+)(in)</text>
        <dbReference type="Rhea" id="RHEA:72187"/>
        <dbReference type="ChEBI" id="CHEBI:15378"/>
        <dbReference type="ChEBI" id="CHEBI:17992"/>
    </reaction>
</comment>
<comment type="biophysicochemical properties">
    <kinetics>
        <KM evidence="4">6.3 mM for sucrose</KM>
    </kinetics>
    <phDependence>
        <text evidence="4">Optimum pH is 6.5.</text>
    </phDependence>
</comment>
<comment type="subcellular location">
    <subcellularLocation>
        <location evidence="7">Membrane</location>
        <topology evidence="7">Multi-pass membrane protein</topology>
    </subcellularLocation>
</comment>
<comment type="alternative products">
    <event type="alternative splicing"/>
    <isoform>
        <id>Q0P5V9-1</id>
        <name>1</name>
        <sequence type="displayed"/>
    </isoform>
    <isoform>
        <id>Q0P5V9-2</id>
        <name>2</name>
        <sequence type="described" ref="VSP_033544"/>
    </isoform>
    <isoform>
        <id>Q0P5V9-3</id>
        <name>3</name>
        <sequence type="described" ref="VSP_033543"/>
    </isoform>
</comment>
<comment type="tissue specificity">
    <text evidence="4">Ubiquitously expressed.</text>
</comment>
<comment type="similarity">
    <text evidence="7">Belongs to the glycoside-pentoside-hexuronide (GPH) cation symporter transporter (TC 2.A.2) family.</text>
</comment>
<proteinExistence type="evidence at protein level"/>
<name>S45A4_MOUSE</name>
<dbReference type="EMBL" id="AK133269">
    <property type="protein sequence ID" value="BAE21586.1"/>
    <property type="molecule type" value="mRNA"/>
</dbReference>
<dbReference type="EMBL" id="AK170738">
    <property type="protein sequence ID" value="BAE41991.1"/>
    <property type="molecule type" value="mRNA"/>
</dbReference>
<dbReference type="EMBL" id="BC056501">
    <property type="protein sequence ID" value="AAH56501.1"/>
    <property type="molecule type" value="mRNA"/>
</dbReference>
<dbReference type="EMBL" id="BC058722">
    <property type="protein sequence ID" value="AAH58722.1"/>
    <property type="molecule type" value="mRNA"/>
</dbReference>
<dbReference type="EMBL" id="AK173104">
    <property type="protein sequence ID" value="BAD32382.1"/>
    <property type="molecule type" value="mRNA"/>
</dbReference>
<dbReference type="CCDS" id="CCDS27517.1">
    <molecule id="Q0P5V9-1"/>
</dbReference>
<dbReference type="CCDS" id="CCDS49632.1">
    <molecule id="Q0P5V9-3"/>
</dbReference>
<dbReference type="RefSeq" id="NP_001028391.2">
    <molecule id="Q0P5V9-1"/>
    <property type="nucleotide sequence ID" value="NM_001033219.4"/>
</dbReference>
<dbReference type="RefSeq" id="NP_001161727.1">
    <molecule id="Q0P5V9-3"/>
    <property type="nucleotide sequence ID" value="NM_001168255.2"/>
</dbReference>
<dbReference type="RefSeq" id="NP_001344676.1">
    <molecule id="Q0P5V9-1"/>
    <property type="nucleotide sequence ID" value="NM_001357747.1"/>
</dbReference>
<dbReference type="RefSeq" id="XP_011243703.1">
    <molecule id="Q0P5V9-1"/>
    <property type="nucleotide sequence ID" value="XM_011245401.1"/>
</dbReference>
<dbReference type="RefSeq" id="XP_011243704.1">
    <property type="nucleotide sequence ID" value="XM_011245402.2"/>
</dbReference>
<dbReference type="RefSeq" id="XP_017171852.1">
    <molecule id="Q0P5V9-1"/>
    <property type="nucleotide sequence ID" value="XM_017316363.3"/>
</dbReference>
<dbReference type="RefSeq" id="XP_017171853.1">
    <molecule id="Q0P5V9-1"/>
    <property type="nucleotide sequence ID" value="XM_017316364.3"/>
</dbReference>
<dbReference type="RefSeq" id="XP_030104126.1">
    <molecule id="Q0P5V9-1"/>
    <property type="nucleotide sequence ID" value="XM_030248266.2"/>
</dbReference>
<dbReference type="SMR" id="Q0P5V9"/>
<dbReference type="FunCoup" id="Q0P5V9">
    <property type="interactions" value="125"/>
</dbReference>
<dbReference type="STRING" id="10090.ENSMUSP00000121775"/>
<dbReference type="GlyGen" id="Q0P5V9">
    <property type="glycosylation" value="1 site, 1 N-linked glycan (1 site)"/>
</dbReference>
<dbReference type="iPTMnet" id="Q0P5V9"/>
<dbReference type="PhosphoSitePlus" id="Q0P5V9"/>
<dbReference type="PaxDb" id="10090-ENSMUSP00000121775"/>
<dbReference type="ProteomicsDB" id="260790">
    <molecule id="Q0P5V9-1"/>
</dbReference>
<dbReference type="ProteomicsDB" id="260791">
    <molecule id="Q0P5V9-2"/>
</dbReference>
<dbReference type="ProteomicsDB" id="260792">
    <molecule id="Q0P5V9-3"/>
</dbReference>
<dbReference type="Antibodypedia" id="14508">
    <property type="antibodies" value="23 antibodies from 10 providers"/>
</dbReference>
<dbReference type="DNASU" id="106068"/>
<dbReference type="Ensembl" id="ENSMUST00000054266.13">
    <molecule id="Q0P5V9-2"/>
    <property type="protein sequence ID" value="ENSMUSP00000054651.7"/>
    <property type="gene ID" value="ENSMUSG00000079020.10"/>
</dbReference>
<dbReference type="Ensembl" id="ENSMUST00000076224.12">
    <molecule id="Q0P5V9-1"/>
    <property type="protein sequence ID" value="ENSMUSP00000075577.6"/>
    <property type="gene ID" value="ENSMUSG00000079020.10"/>
</dbReference>
<dbReference type="Ensembl" id="ENSMUST00000132607.2">
    <molecule id="Q0P5V9-3"/>
    <property type="protein sequence ID" value="ENSMUSP00000115827.2"/>
    <property type="gene ID" value="ENSMUSG00000079020.10"/>
</dbReference>
<dbReference type="Ensembl" id="ENSMUST00000151288.8">
    <molecule id="Q0P5V9-1"/>
    <property type="protein sequence ID" value="ENSMUSP00000121775.2"/>
    <property type="gene ID" value="ENSMUSG00000079020.10"/>
</dbReference>
<dbReference type="GeneID" id="106068"/>
<dbReference type="KEGG" id="mmu:106068"/>
<dbReference type="UCSC" id="uc007wcf.2">
    <molecule id="Q0P5V9-1"/>
    <property type="organism name" value="mouse"/>
</dbReference>
<dbReference type="UCSC" id="uc007wcg.2">
    <molecule id="Q0P5V9-2"/>
    <property type="organism name" value="mouse"/>
</dbReference>
<dbReference type="AGR" id="MGI:2146236"/>
<dbReference type="CTD" id="57210"/>
<dbReference type="MGI" id="MGI:2146236">
    <property type="gene designation" value="Slc45a4"/>
</dbReference>
<dbReference type="VEuPathDB" id="HostDB:ENSMUSG00000079020"/>
<dbReference type="eggNOG" id="KOG0637">
    <property type="taxonomic scope" value="Eukaryota"/>
</dbReference>
<dbReference type="GeneTree" id="ENSGT00950000182914"/>
<dbReference type="InParanoid" id="Q0P5V9"/>
<dbReference type="OMA" id="VPNINGS"/>
<dbReference type="OrthoDB" id="57890at9989"/>
<dbReference type="PhylomeDB" id="Q0P5V9"/>
<dbReference type="TreeFam" id="TF325412"/>
<dbReference type="BioGRID-ORCS" id="106068">
    <property type="hits" value="6 hits in 79 CRISPR screens"/>
</dbReference>
<dbReference type="ChiTaRS" id="Slc45a4">
    <property type="organism name" value="mouse"/>
</dbReference>
<dbReference type="PRO" id="PR:Q0P5V9"/>
<dbReference type="Proteomes" id="UP000000589">
    <property type="component" value="Chromosome 15"/>
</dbReference>
<dbReference type="RNAct" id="Q0P5V9">
    <property type="molecule type" value="protein"/>
</dbReference>
<dbReference type="Bgee" id="ENSMUSG00000079020">
    <property type="expression patterns" value="Expressed in placenta labyrinth and 222 other cell types or tissues"/>
</dbReference>
<dbReference type="ExpressionAtlas" id="Q0P5V9">
    <property type="expression patterns" value="baseline and differential"/>
</dbReference>
<dbReference type="GO" id="GO:0016020">
    <property type="term" value="C:membrane"/>
    <property type="evidence" value="ECO:0007669"/>
    <property type="project" value="UniProtKB-SubCell"/>
</dbReference>
<dbReference type="GO" id="GO:0008506">
    <property type="term" value="F:sucrose:proton symporter activity"/>
    <property type="evidence" value="ECO:0000314"/>
    <property type="project" value="MGI"/>
</dbReference>
<dbReference type="GO" id="GO:0015770">
    <property type="term" value="P:sucrose transport"/>
    <property type="evidence" value="ECO:0000314"/>
    <property type="project" value="MGI"/>
</dbReference>
<dbReference type="FunFam" id="1.20.1250.20:FF:000069">
    <property type="entry name" value="Solute carrier family 45 member 4"/>
    <property type="match status" value="1"/>
</dbReference>
<dbReference type="FunFam" id="1.20.1250.20:FF:000328">
    <property type="entry name" value="Solute carrier family 45 member 4"/>
    <property type="match status" value="1"/>
</dbReference>
<dbReference type="Gene3D" id="1.20.1250.20">
    <property type="entry name" value="MFS general substrate transporter like domains"/>
    <property type="match status" value="2"/>
</dbReference>
<dbReference type="InterPro" id="IPR011701">
    <property type="entry name" value="MFS"/>
</dbReference>
<dbReference type="InterPro" id="IPR036259">
    <property type="entry name" value="MFS_trans_sf"/>
</dbReference>
<dbReference type="PANTHER" id="PTHR19432:SF7">
    <property type="entry name" value="SOLUTE CARRIER FAMILY 45 MEMBER 4"/>
    <property type="match status" value="1"/>
</dbReference>
<dbReference type="PANTHER" id="PTHR19432">
    <property type="entry name" value="SUGAR TRANSPORTER"/>
    <property type="match status" value="1"/>
</dbReference>
<dbReference type="Pfam" id="PF07690">
    <property type="entry name" value="MFS_1"/>
    <property type="match status" value="1"/>
</dbReference>
<dbReference type="SUPFAM" id="SSF103473">
    <property type="entry name" value="MFS general substrate transporter"/>
    <property type="match status" value="1"/>
</dbReference>
<protein>
    <recommendedName>
        <fullName>Solute carrier family 45 member 4</fullName>
    </recommendedName>
</protein>
<feature type="chain" id="PRO_0000333804" description="Solute carrier family 45 member 4">
    <location>
        <begin position="1"/>
        <end position="785"/>
    </location>
</feature>
<feature type="transmembrane region" description="Helical" evidence="2">
    <location>
        <begin position="64"/>
        <end position="84"/>
    </location>
</feature>
<feature type="transmembrane region" description="Helical" evidence="2">
    <location>
        <begin position="87"/>
        <end position="107"/>
    </location>
</feature>
<feature type="transmembrane region" description="Helical" evidence="2">
    <location>
        <begin position="124"/>
        <end position="144"/>
    </location>
</feature>
<feature type="transmembrane region" description="Helical" evidence="2">
    <location>
        <begin position="156"/>
        <end position="176"/>
    </location>
</feature>
<feature type="transmembrane region" description="Helical" evidence="2">
    <location>
        <begin position="197"/>
        <end position="217"/>
    </location>
</feature>
<feature type="transmembrane region" description="Helical" evidence="2">
    <location>
        <begin position="234"/>
        <end position="254"/>
    </location>
</feature>
<feature type="transmembrane region" description="Helical" evidence="2">
    <location>
        <begin position="525"/>
        <end position="545"/>
    </location>
</feature>
<feature type="transmembrane region" description="Helical" evidence="2">
    <location>
        <begin position="577"/>
        <end position="597"/>
    </location>
</feature>
<feature type="transmembrane region" description="Helical" evidence="2">
    <location>
        <begin position="609"/>
        <end position="629"/>
    </location>
</feature>
<feature type="transmembrane region" description="Helical" evidence="2">
    <location>
        <begin position="631"/>
        <end position="651"/>
    </location>
</feature>
<feature type="transmembrane region" description="Helical" evidence="2">
    <location>
        <begin position="683"/>
        <end position="703"/>
    </location>
</feature>
<feature type="transmembrane region" description="Helical" evidence="2">
    <location>
        <begin position="709"/>
        <end position="729"/>
    </location>
</feature>
<feature type="region of interest" description="Disordered" evidence="3">
    <location>
        <begin position="1"/>
        <end position="43"/>
    </location>
</feature>
<feature type="region of interest" description="Disordered" evidence="3">
    <location>
        <begin position="259"/>
        <end position="309"/>
    </location>
</feature>
<feature type="region of interest" description="Disordered" evidence="3">
    <location>
        <begin position="401"/>
        <end position="430"/>
    </location>
</feature>
<feature type="region of interest" description="Disordered" evidence="3">
    <location>
        <begin position="478"/>
        <end position="505"/>
    </location>
</feature>
<feature type="region of interest" description="Disordered" evidence="3">
    <location>
        <begin position="741"/>
        <end position="772"/>
    </location>
</feature>
<feature type="compositionally biased region" description="Low complexity" evidence="3">
    <location>
        <begin position="490"/>
        <end position="499"/>
    </location>
</feature>
<feature type="modified residue" description="Phosphoserine" evidence="1">
    <location>
        <position position="442"/>
    </location>
</feature>
<feature type="modified residue" description="Phosphoserine" evidence="8">
    <location>
        <position position="472"/>
    </location>
</feature>
<feature type="modified residue" description="Phosphoserine" evidence="8">
    <location>
        <position position="502"/>
    </location>
</feature>
<feature type="modified residue" description="Phosphoserine" evidence="1">
    <location>
        <position position="749"/>
    </location>
</feature>
<feature type="splice variant" id="VSP_033543" description="In isoform 3." evidence="6">
    <location>
        <begin position="1"/>
        <end position="194"/>
    </location>
</feature>
<feature type="splice variant" id="VSP_033544" description="In isoform 2." evidence="5">
    <original>A</original>
    <variation>AGKAPLQAP</variation>
    <location>
        <position position="204"/>
    </location>
</feature>
<feature type="sequence conflict" description="In Ref. 1; BAE21586." evidence="7" ref="1">
    <original>D</original>
    <variation>Y</variation>
    <location>
        <position position="174"/>
    </location>
</feature>
<feature type="sequence conflict" description="In Ref. 1; BAE41991." evidence="7" ref="1">
    <original>S</original>
    <variation>G</variation>
    <location>
        <position position="365"/>
    </location>
</feature>
<gene>
    <name type="primary">Slc45a4</name>
    <name type="synonym">Kiaa1126</name>
</gene>
<keyword id="KW-0025">Alternative splicing</keyword>
<keyword id="KW-0472">Membrane</keyword>
<keyword id="KW-0597">Phosphoprotein</keyword>
<keyword id="KW-1185">Reference proteome</keyword>
<keyword id="KW-0769">Symport</keyword>
<keyword id="KW-0812">Transmembrane</keyword>
<keyword id="KW-1133">Transmembrane helix</keyword>
<keyword id="KW-0813">Transport</keyword>
<reference key="1">
    <citation type="journal article" date="2005" name="Science">
        <title>The transcriptional landscape of the mammalian genome.</title>
        <authorList>
            <person name="Carninci P."/>
            <person name="Kasukawa T."/>
            <person name="Katayama S."/>
            <person name="Gough J."/>
            <person name="Frith M.C."/>
            <person name="Maeda N."/>
            <person name="Oyama R."/>
            <person name="Ravasi T."/>
            <person name="Lenhard B."/>
            <person name="Wells C."/>
            <person name="Kodzius R."/>
            <person name="Shimokawa K."/>
            <person name="Bajic V.B."/>
            <person name="Brenner S.E."/>
            <person name="Batalov S."/>
            <person name="Forrest A.R."/>
            <person name="Zavolan M."/>
            <person name="Davis M.J."/>
            <person name="Wilming L.G."/>
            <person name="Aidinis V."/>
            <person name="Allen J.E."/>
            <person name="Ambesi-Impiombato A."/>
            <person name="Apweiler R."/>
            <person name="Aturaliya R.N."/>
            <person name="Bailey T.L."/>
            <person name="Bansal M."/>
            <person name="Baxter L."/>
            <person name="Beisel K.W."/>
            <person name="Bersano T."/>
            <person name="Bono H."/>
            <person name="Chalk A.M."/>
            <person name="Chiu K.P."/>
            <person name="Choudhary V."/>
            <person name="Christoffels A."/>
            <person name="Clutterbuck D.R."/>
            <person name="Crowe M.L."/>
            <person name="Dalla E."/>
            <person name="Dalrymple B.P."/>
            <person name="de Bono B."/>
            <person name="Della Gatta G."/>
            <person name="di Bernardo D."/>
            <person name="Down T."/>
            <person name="Engstrom P."/>
            <person name="Fagiolini M."/>
            <person name="Faulkner G."/>
            <person name="Fletcher C.F."/>
            <person name="Fukushima T."/>
            <person name="Furuno M."/>
            <person name="Futaki S."/>
            <person name="Gariboldi M."/>
            <person name="Georgii-Hemming P."/>
            <person name="Gingeras T.R."/>
            <person name="Gojobori T."/>
            <person name="Green R.E."/>
            <person name="Gustincich S."/>
            <person name="Harbers M."/>
            <person name="Hayashi Y."/>
            <person name="Hensch T.K."/>
            <person name="Hirokawa N."/>
            <person name="Hill D."/>
            <person name="Huminiecki L."/>
            <person name="Iacono M."/>
            <person name="Ikeo K."/>
            <person name="Iwama A."/>
            <person name="Ishikawa T."/>
            <person name="Jakt M."/>
            <person name="Kanapin A."/>
            <person name="Katoh M."/>
            <person name="Kawasawa Y."/>
            <person name="Kelso J."/>
            <person name="Kitamura H."/>
            <person name="Kitano H."/>
            <person name="Kollias G."/>
            <person name="Krishnan S.P."/>
            <person name="Kruger A."/>
            <person name="Kummerfeld S.K."/>
            <person name="Kurochkin I.V."/>
            <person name="Lareau L.F."/>
            <person name="Lazarevic D."/>
            <person name="Lipovich L."/>
            <person name="Liu J."/>
            <person name="Liuni S."/>
            <person name="McWilliam S."/>
            <person name="Madan Babu M."/>
            <person name="Madera M."/>
            <person name="Marchionni L."/>
            <person name="Matsuda H."/>
            <person name="Matsuzawa S."/>
            <person name="Miki H."/>
            <person name="Mignone F."/>
            <person name="Miyake S."/>
            <person name="Morris K."/>
            <person name="Mottagui-Tabar S."/>
            <person name="Mulder N."/>
            <person name="Nakano N."/>
            <person name="Nakauchi H."/>
            <person name="Ng P."/>
            <person name="Nilsson R."/>
            <person name="Nishiguchi S."/>
            <person name="Nishikawa S."/>
            <person name="Nori F."/>
            <person name="Ohara O."/>
            <person name="Okazaki Y."/>
            <person name="Orlando V."/>
            <person name="Pang K.C."/>
            <person name="Pavan W.J."/>
            <person name="Pavesi G."/>
            <person name="Pesole G."/>
            <person name="Petrovsky N."/>
            <person name="Piazza S."/>
            <person name="Reed J."/>
            <person name="Reid J.F."/>
            <person name="Ring B.Z."/>
            <person name="Ringwald M."/>
            <person name="Rost B."/>
            <person name="Ruan Y."/>
            <person name="Salzberg S.L."/>
            <person name="Sandelin A."/>
            <person name="Schneider C."/>
            <person name="Schoenbach C."/>
            <person name="Sekiguchi K."/>
            <person name="Semple C.A."/>
            <person name="Seno S."/>
            <person name="Sessa L."/>
            <person name="Sheng Y."/>
            <person name="Shibata Y."/>
            <person name="Shimada H."/>
            <person name="Shimada K."/>
            <person name="Silva D."/>
            <person name="Sinclair B."/>
            <person name="Sperling S."/>
            <person name="Stupka E."/>
            <person name="Sugiura K."/>
            <person name="Sultana R."/>
            <person name="Takenaka Y."/>
            <person name="Taki K."/>
            <person name="Tammoja K."/>
            <person name="Tan S.L."/>
            <person name="Tang S."/>
            <person name="Taylor M.S."/>
            <person name="Tegner J."/>
            <person name="Teichmann S.A."/>
            <person name="Ueda H.R."/>
            <person name="van Nimwegen E."/>
            <person name="Verardo R."/>
            <person name="Wei C.L."/>
            <person name="Yagi K."/>
            <person name="Yamanishi H."/>
            <person name="Zabarovsky E."/>
            <person name="Zhu S."/>
            <person name="Zimmer A."/>
            <person name="Hide W."/>
            <person name="Bult C."/>
            <person name="Grimmond S.M."/>
            <person name="Teasdale R.D."/>
            <person name="Liu E.T."/>
            <person name="Brusic V."/>
            <person name="Quackenbush J."/>
            <person name="Wahlestedt C."/>
            <person name="Mattick J.S."/>
            <person name="Hume D.A."/>
            <person name="Kai C."/>
            <person name="Sasaki D."/>
            <person name="Tomaru Y."/>
            <person name="Fukuda S."/>
            <person name="Kanamori-Katayama M."/>
            <person name="Suzuki M."/>
            <person name="Aoki J."/>
            <person name="Arakawa T."/>
            <person name="Iida J."/>
            <person name="Imamura K."/>
            <person name="Itoh M."/>
            <person name="Kato T."/>
            <person name="Kawaji H."/>
            <person name="Kawagashira N."/>
            <person name="Kawashima T."/>
            <person name="Kojima M."/>
            <person name="Kondo S."/>
            <person name="Konno H."/>
            <person name="Nakano K."/>
            <person name="Ninomiya N."/>
            <person name="Nishio T."/>
            <person name="Okada M."/>
            <person name="Plessy C."/>
            <person name="Shibata K."/>
            <person name="Shiraki T."/>
            <person name="Suzuki S."/>
            <person name="Tagami M."/>
            <person name="Waki K."/>
            <person name="Watahiki A."/>
            <person name="Okamura-Oho Y."/>
            <person name="Suzuki H."/>
            <person name="Kawai J."/>
            <person name="Hayashizaki Y."/>
        </authorList>
    </citation>
    <scope>NUCLEOTIDE SEQUENCE [LARGE SCALE MRNA] (ISOFORMS 1 AND 3)</scope>
    <source>
        <strain>C57BL/6J</strain>
        <strain>NOD</strain>
        <tissue>Testis</tissue>
    </source>
</reference>
<reference key="2">
    <citation type="journal article" date="2004" name="Genome Res.">
        <title>The status, quality, and expansion of the NIH full-length cDNA project: the Mammalian Gene Collection (MGC).</title>
        <authorList>
            <consortium name="The MGC Project Team"/>
        </authorList>
    </citation>
    <scope>NUCLEOTIDE SEQUENCE [LARGE SCALE MRNA] (ISOFORM 1)</scope>
    <scope>NUCLEOTIDE SEQUENCE [LARGE SCALE MRNA] OF 74-785 (ISOFORM 2)</scope>
    <source>
        <strain>C57BL/6J</strain>
        <tissue>Brain</tissue>
    </source>
</reference>
<reference key="3">
    <citation type="journal article" date="2004" name="DNA Res.">
        <title>Prediction of the coding sequences of mouse homologues of KIAA gene: IV. The complete nucleotide sequences of 500 mouse KIAA-homologous cDNAs identified by screening of terminal sequences of cDNA clones randomly sampled from size-fractionated libraries.</title>
        <authorList>
            <person name="Okazaki N."/>
            <person name="Kikuno R."/>
            <person name="Ohara R."/>
            <person name="Inamoto S."/>
            <person name="Koseki H."/>
            <person name="Hiraoka S."/>
            <person name="Saga Y."/>
            <person name="Seino S."/>
            <person name="Nishimura M."/>
            <person name="Kaisho T."/>
            <person name="Hoshino K."/>
            <person name="Kitamura H."/>
            <person name="Nagase T."/>
            <person name="Ohara O."/>
            <person name="Koga H."/>
        </authorList>
    </citation>
    <scope>NUCLEOTIDE SEQUENCE [LARGE SCALE MRNA] OF 312-785 (ISOFORM 1/3)</scope>
    <source>
        <tissue>Brain</tissue>
    </source>
</reference>
<reference key="4">
    <citation type="journal article" date="2010" name="Cell">
        <title>A tissue-specific atlas of mouse protein phosphorylation and expression.</title>
        <authorList>
            <person name="Huttlin E.L."/>
            <person name="Jedrychowski M.P."/>
            <person name="Elias J.E."/>
            <person name="Goswami T."/>
            <person name="Rad R."/>
            <person name="Beausoleil S.A."/>
            <person name="Villen J."/>
            <person name="Haas W."/>
            <person name="Sowa M.E."/>
            <person name="Gygi S.P."/>
        </authorList>
    </citation>
    <scope>PHOSPHORYLATION [LARGE SCALE ANALYSIS] AT SER-472 AND SER-502</scope>
    <scope>IDENTIFICATION BY MASS SPECTROMETRY [LARGE SCALE ANALYSIS]</scope>
    <source>
        <tissue>Brain</tissue>
        <tissue>Kidney</tissue>
        <tissue>Testis</tissue>
    </source>
</reference>
<reference key="5">
    <citation type="journal article" date="2014" name="Biochem. J.">
        <title>Proton-associated sucrose transport of mammalian solute carrier family 45: an analysis in Saccharomyces cerevisiae.</title>
        <authorList>
            <person name="Bartoelke R."/>
            <person name="Heinisch J.J."/>
            <person name="Wieczorek H."/>
            <person name="Vitavska O."/>
        </authorList>
    </citation>
    <scope>FUNCTION</scope>
    <scope>TRANSPORTER ACTIVITY</scope>
    <scope>SUBCELLULAR LOCATION</scope>
    <scope>BIOPHYSICOCHEMICAL PROPERTIES</scope>
    <scope>TISSUE SPECIFICITY</scope>
</reference>
<organism>
    <name type="scientific">Mus musculus</name>
    <name type="common">Mouse</name>
    <dbReference type="NCBI Taxonomy" id="10090"/>
    <lineage>
        <taxon>Eukaryota</taxon>
        <taxon>Metazoa</taxon>
        <taxon>Chordata</taxon>
        <taxon>Craniata</taxon>
        <taxon>Vertebrata</taxon>
        <taxon>Euteleostomi</taxon>
        <taxon>Mammalia</taxon>
        <taxon>Eutheria</taxon>
        <taxon>Euarchontoglires</taxon>
        <taxon>Glires</taxon>
        <taxon>Rodentia</taxon>
        <taxon>Myomorpha</taxon>
        <taxon>Muroidea</taxon>
        <taxon>Muridae</taxon>
        <taxon>Murinae</taxon>
        <taxon>Mus</taxon>
        <taxon>Mus</taxon>
    </lineage>
</organism>
<accession>Q0P5V9</accession>
<accession>Q3TCG5</accession>
<accession>Q3V0B8</accession>
<accession>Q69ZR4</accession>
<accession>Q6PDG3</accession>
<sequence length="785" mass="85765">MKMAPQNADSESMQVQELPVPLPDPQKPRDPEAETQEETTSEGSIDRIPTRLWVMHGAVMFGREFCYAMETALVTPILLQIGLPEKYYSLTWFLSPVLGLIFTPLIGSASDRCTLSWGRRRPFILALCVGVLIGVALFLNGSAIGLALGDVPSRQPIGIVLTVLGVVVLDFSADATEGPIRAYLLDVVDSEEQDMALNIHAFSAGLGGAIGYVLGGLDWTQTFLGDWFQTQNQVLFFFAAVIFSVSVALHLFSIEEEQYSPQQDRGPEDPTLPGTSVQPGAPAPASRLSSLGGGMQDGSPPFPDEVQSEHELSLDYLDVDIVRSKSDSVLHMADATLDMEPQLLFLHDIEPSIFQDASYPSTPQSTSQELLRAKLPRLSTFLRESTKEDDTLLDNHLNEAKVPNGRGSPPINSLSRSKVDLKPSVTSGSMRRRRHMFHRQASSTFSYYGKIGSHCYRYRRANAVVLIKPSRSMSDLYDLQQRQRSRHRNQSGATASSGDTESEEGETETTVRLLWLSMLKMPKELMWLCLCHLLTWFSVIAEAVFYTDFMGQVIFKGNPQAPSNSTKWHAYNAGVKMGCWGLVIYAATGAICSALLQKYLDNYDLSIRIIYMLGTLGFSVGTAVMAMFPNVYVAMVTISTMGVVSMSISYCPYALLGHYHDIKEYVHHSPGNSKRGFGIDCAILSCQVYISQILVASALGGVVDAVNSIVVIPIVASVGSFLGFLTATFLVIYPEVSEEPKEEQKGLSSGPAGEGEGGAGSEKPTVLKLSRKGGLRGLVETESMV</sequence>
<evidence type="ECO:0000250" key="1">
    <source>
        <dbReference type="UniProtKB" id="Q5BKX6"/>
    </source>
</evidence>
<evidence type="ECO:0000255" key="2"/>
<evidence type="ECO:0000256" key="3">
    <source>
        <dbReference type="SAM" id="MobiDB-lite"/>
    </source>
</evidence>
<evidence type="ECO:0000269" key="4">
    <source>
    </source>
</evidence>
<evidence type="ECO:0000303" key="5">
    <source>
    </source>
</evidence>
<evidence type="ECO:0000303" key="6">
    <source>
    </source>
</evidence>
<evidence type="ECO:0000305" key="7"/>
<evidence type="ECO:0007744" key="8">
    <source>
    </source>
</evidence>